<comment type="function">
    <text evidence="1">This protein binds to the 23S rRNA, and is important in its secondary structure. It is located near the subunit interface in the base of the L7/L12 stalk, and near the tRNA binding site of the peptidyltransferase center.</text>
</comment>
<comment type="subunit">
    <text evidence="1">Part of the 50S ribosomal subunit.</text>
</comment>
<comment type="similarity">
    <text evidence="1">Belongs to the universal ribosomal protein uL6 family.</text>
</comment>
<organism>
    <name type="scientific">Pseudomonas aeruginosa (strain ATCC 15692 / DSM 22644 / CIP 104116 / JCM 14847 / LMG 12228 / 1C / PRS 101 / PAO1)</name>
    <dbReference type="NCBI Taxonomy" id="208964"/>
    <lineage>
        <taxon>Bacteria</taxon>
        <taxon>Pseudomonadati</taxon>
        <taxon>Pseudomonadota</taxon>
        <taxon>Gammaproteobacteria</taxon>
        <taxon>Pseudomonadales</taxon>
        <taxon>Pseudomonadaceae</taxon>
        <taxon>Pseudomonas</taxon>
    </lineage>
</organism>
<sequence length="177" mass="19099">MSRVAKNPVKLPAGVEIKLAGQQLSIKGAKGALELKVHPSVEVIQDSGELRFAARNGDQQTRAMAGTTRALVNNMVVGVSQGFERKLQLVGVGYKAQAKGQVLSLSLGFSHPVDYELPAGIVAETPSQTDILIKGIDKQLVGQVAAEIRDFRPPEPYKGKGVRYADEVVRRKEAKKK</sequence>
<protein>
    <recommendedName>
        <fullName evidence="1">Large ribosomal subunit protein uL6</fullName>
    </recommendedName>
    <alternativeName>
        <fullName evidence="2">50S ribosomal protein L6</fullName>
    </alternativeName>
</protein>
<keyword id="KW-0002">3D-structure</keyword>
<keyword id="KW-1185">Reference proteome</keyword>
<keyword id="KW-0687">Ribonucleoprotein</keyword>
<keyword id="KW-0689">Ribosomal protein</keyword>
<keyword id="KW-0694">RNA-binding</keyword>
<keyword id="KW-0699">rRNA-binding</keyword>
<proteinExistence type="evidence at protein level"/>
<evidence type="ECO:0000255" key="1">
    <source>
        <dbReference type="HAMAP-Rule" id="MF_01365"/>
    </source>
</evidence>
<evidence type="ECO:0000305" key="2"/>
<reference key="1">
    <citation type="journal article" date="2000" name="Nature">
        <title>Complete genome sequence of Pseudomonas aeruginosa PAO1, an opportunistic pathogen.</title>
        <authorList>
            <person name="Stover C.K."/>
            <person name="Pham X.-Q.T."/>
            <person name="Erwin A.L."/>
            <person name="Mizoguchi S.D."/>
            <person name="Warrener P."/>
            <person name="Hickey M.J."/>
            <person name="Brinkman F.S.L."/>
            <person name="Hufnagle W.O."/>
            <person name="Kowalik D.J."/>
            <person name="Lagrou M."/>
            <person name="Garber R.L."/>
            <person name="Goltry L."/>
            <person name="Tolentino E."/>
            <person name="Westbrock-Wadman S."/>
            <person name="Yuan Y."/>
            <person name="Brody L.L."/>
            <person name="Coulter S.N."/>
            <person name="Folger K.R."/>
            <person name="Kas A."/>
            <person name="Larbig K."/>
            <person name="Lim R.M."/>
            <person name="Smith K.A."/>
            <person name="Spencer D.H."/>
            <person name="Wong G.K.-S."/>
            <person name="Wu Z."/>
            <person name="Paulsen I.T."/>
            <person name="Reizer J."/>
            <person name="Saier M.H. Jr."/>
            <person name="Hancock R.E.W."/>
            <person name="Lory S."/>
            <person name="Olson M.V."/>
        </authorList>
    </citation>
    <scope>NUCLEOTIDE SEQUENCE [LARGE SCALE GENOMIC DNA]</scope>
    <source>
        <strain>ATCC 15692 / DSM 22644 / CIP 104116 / JCM 14847 / LMG 12228 / 1C / PRS 101 / PAO1</strain>
    </source>
</reference>
<dbReference type="EMBL" id="AE004091">
    <property type="protein sequence ID" value="AAG07636.1"/>
    <property type="molecule type" value="Genomic_DNA"/>
</dbReference>
<dbReference type="PIR" id="F83114">
    <property type="entry name" value="F83114"/>
</dbReference>
<dbReference type="RefSeq" id="NP_252938.1">
    <property type="nucleotide sequence ID" value="NC_002516.2"/>
</dbReference>
<dbReference type="RefSeq" id="WP_003093699.1">
    <property type="nucleotide sequence ID" value="NZ_QZGE01000028.1"/>
</dbReference>
<dbReference type="PDB" id="7UNR">
    <property type="method" value="EM"/>
    <property type="resolution" value="2.90 A"/>
    <property type="chains" value="G=1-177"/>
</dbReference>
<dbReference type="PDB" id="7UNU">
    <property type="method" value="EM"/>
    <property type="resolution" value="2.90 A"/>
    <property type="chains" value="G=1-177"/>
</dbReference>
<dbReference type="PDB" id="7UNV">
    <property type="method" value="EM"/>
    <property type="resolution" value="2.70 A"/>
    <property type="chains" value="G=1-177"/>
</dbReference>
<dbReference type="PDB" id="7UNW">
    <property type="method" value="EM"/>
    <property type="resolution" value="2.60 A"/>
    <property type="chains" value="G=1-177"/>
</dbReference>
<dbReference type="PDB" id="8CD1">
    <property type="method" value="EM"/>
    <property type="resolution" value="3.00 A"/>
    <property type="chains" value="G=1-177"/>
</dbReference>
<dbReference type="PDB" id="8RWG">
    <property type="method" value="EM"/>
    <property type="resolution" value="2.46 A"/>
    <property type="chains" value="H=1-177"/>
</dbReference>
<dbReference type="PDBsum" id="7UNR"/>
<dbReference type="PDBsum" id="7UNU"/>
<dbReference type="PDBsum" id="7UNV"/>
<dbReference type="PDBsum" id="7UNW"/>
<dbReference type="PDBsum" id="8CD1"/>
<dbReference type="PDBsum" id="8RWG"/>
<dbReference type="EMDB" id="EMD-16566"/>
<dbReference type="EMDB" id="EMD-19547"/>
<dbReference type="EMDB" id="EMD-26630"/>
<dbReference type="EMDB" id="EMD-26633"/>
<dbReference type="EMDB" id="EMD-26634"/>
<dbReference type="EMDB" id="EMD-26635"/>
<dbReference type="SMR" id="Q9HWF0"/>
<dbReference type="FunCoup" id="Q9HWF0">
    <property type="interactions" value="891"/>
</dbReference>
<dbReference type="STRING" id="208964.PA4248"/>
<dbReference type="PaxDb" id="208964-PA4248"/>
<dbReference type="GeneID" id="77219213"/>
<dbReference type="GeneID" id="881796"/>
<dbReference type="KEGG" id="pae:PA4248"/>
<dbReference type="PATRIC" id="fig|208964.12.peg.4449"/>
<dbReference type="PseudoCAP" id="PA4248"/>
<dbReference type="HOGENOM" id="CLU_065464_1_2_6"/>
<dbReference type="InParanoid" id="Q9HWF0"/>
<dbReference type="OrthoDB" id="9805007at2"/>
<dbReference type="PhylomeDB" id="Q9HWF0"/>
<dbReference type="BioCyc" id="PAER208964:G1FZ6-4321-MONOMER"/>
<dbReference type="PRO" id="PR:Q9HWF0"/>
<dbReference type="Proteomes" id="UP000002438">
    <property type="component" value="Chromosome"/>
</dbReference>
<dbReference type="GO" id="GO:0022625">
    <property type="term" value="C:cytosolic large ribosomal subunit"/>
    <property type="evidence" value="ECO:0000318"/>
    <property type="project" value="GO_Central"/>
</dbReference>
<dbReference type="GO" id="GO:0019843">
    <property type="term" value="F:rRNA binding"/>
    <property type="evidence" value="ECO:0007669"/>
    <property type="project" value="UniProtKB-UniRule"/>
</dbReference>
<dbReference type="GO" id="GO:0003735">
    <property type="term" value="F:structural constituent of ribosome"/>
    <property type="evidence" value="ECO:0000318"/>
    <property type="project" value="GO_Central"/>
</dbReference>
<dbReference type="GO" id="GO:0002181">
    <property type="term" value="P:cytoplasmic translation"/>
    <property type="evidence" value="ECO:0000318"/>
    <property type="project" value="GO_Central"/>
</dbReference>
<dbReference type="FunFam" id="3.90.930.12:FF:000001">
    <property type="entry name" value="50S ribosomal protein L6"/>
    <property type="match status" value="1"/>
</dbReference>
<dbReference type="FunFam" id="3.90.930.12:FF:000002">
    <property type="entry name" value="50S ribosomal protein L6"/>
    <property type="match status" value="1"/>
</dbReference>
<dbReference type="Gene3D" id="3.90.930.12">
    <property type="entry name" value="Ribosomal protein L6, alpha-beta domain"/>
    <property type="match status" value="2"/>
</dbReference>
<dbReference type="HAMAP" id="MF_01365_B">
    <property type="entry name" value="Ribosomal_uL6_B"/>
    <property type="match status" value="1"/>
</dbReference>
<dbReference type="InterPro" id="IPR000702">
    <property type="entry name" value="Ribosomal_uL6-like"/>
</dbReference>
<dbReference type="InterPro" id="IPR036789">
    <property type="entry name" value="Ribosomal_uL6-like_a/b-dom_sf"/>
</dbReference>
<dbReference type="InterPro" id="IPR020040">
    <property type="entry name" value="Ribosomal_uL6_a/b-dom"/>
</dbReference>
<dbReference type="InterPro" id="IPR019906">
    <property type="entry name" value="Ribosomal_uL6_bac-type"/>
</dbReference>
<dbReference type="InterPro" id="IPR002358">
    <property type="entry name" value="Ribosomal_uL6_CS"/>
</dbReference>
<dbReference type="NCBIfam" id="TIGR03654">
    <property type="entry name" value="L6_bact"/>
    <property type="match status" value="1"/>
</dbReference>
<dbReference type="PANTHER" id="PTHR11655">
    <property type="entry name" value="60S/50S RIBOSOMAL PROTEIN L6/L9"/>
    <property type="match status" value="1"/>
</dbReference>
<dbReference type="PANTHER" id="PTHR11655:SF14">
    <property type="entry name" value="LARGE RIBOSOMAL SUBUNIT PROTEIN UL6M"/>
    <property type="match status" value="1"/>
</dbReference>
<dbReference type="Pfam" id="PF00347">
    <property type="entry name" value="Ribosomal_L6"/>
    <property type="match status" value="2"/>
</dbReference>
<dbReference type="PIRSF" id="PIRSF002162">
    <property type="entry name" value="Ribosomal_L6"/>
    <property type="match status" value="1"/>
</dbReference>
<dbReference type="PRINTS" id="PR00059">
    <property type="entry name" value="RIBOSOMALL6"/>
</dbReference>
<dbReference type="SUPFAM" id="SSF56053">
    <property type="entry name" value="Ribosomal protein L6"/>
    <property type="match status" value="2"/>
</dbReference>
<dbReference type="PROSITE" id="PS00525">
    <property type="entry name" value="RIBOSOMAL_L6_1"/>
    <property type="match status" value="1"/>
</dbReference>
<feature type="chain" id="PRO_0000260919" description="Large ribosomal subunit protein uL6">
    <location>
        <begin position="1"/>
        <end position="177"/>
    </location>
</feature>
<accession>Q9HWF0</accession>
<name>RL6_PSEAE</name>
<gene>
    <name evidence="1" type="primary">rplF</name>
    <name type="ordered locus">PA4248</name>
</gene>